<reference key="1">
    <citation type="journal article" date="2004" name="Proc. Natl. Acad. Sci. U.S.A.">
        <title>The genome sequence of the probiotic intestinal bacterium Lactobacillus johnsonii NCC 533.</title>
        <authorList>
            <person name="Pridmore R.D."/>
            <person name="Berger B."/>
            <person name="Desiere F."/>
            <person name="Vilanova D."/>
            <person name="Barretto C."/>
            <person name="Pittet A.-C."/>
            <person name="Zwahlen M.-C."/>
            <person name="Rouvet M."/>
            <person name="Altermann E."/>
            <person name="Barrangou R."/>
            <person name="Mollet B."/>
            <person name="Mercenier A."/>
            <person name="Klaenhammer T."/>
            <person name="Arigoni F."/>
            <person name="Schell M.A."/>
        </authorList>
    </citation>
    <scope>NUCLEOTIDE SEQUENCE [LARGE SCALE GENOMIC DNA]</scope>
    <source>
        <strain>CNCM I-1225 / La1 / NCC 533</strain>
    </source>
</reference>
<feature type="chain" id="PRO_0000243437" description="Large ribosomal subunit protein bL12">
    <location>
        <begin position="1"/>
        <end position="120"/>
    </location>
</feature>
<proteinExistence type="inferred from homology"/>
<protein>
    <recommendedName>
        <fullName evidence="1">Large ribosomal subunit protein bL12</fullName>
    </recommendedName>
    <alternativeName>
        <fullName evidence="2">50S ribosomal protein L7/L12</fullName>
    </alternativeName>
</protein>
<organism>
    <name type="scientific">Lactobacillus johnsonii (strain CNCM I-12250 / La1 / NCC 533)</name>
    <dbReference type="NCBI Taxonomy" id="257314"/>
    <lineage>
        <taxon>Bacteria</taxon>
        <taxon>Bacillati</taxon>
        <taxon>Bacillota</taxon>
        <taxon>Bacilli</taxon>
        <taxon>Lactobacillales</taxon>
        <taxon>Lactobacillaceae</taxon>
        <taxon>Lactobacillus</taxon>
    </lineage>
</organism>
<gene>
    <name evidence="1" type="primary">rplL</name>
    <name type="ordered locus">LJ_0416</name>
</gene>
<evidence type="ECO:0000255" key="1">
    <source>
        <dbReference type="HAMAP-Rule" id="MF_00368"/>
    </source>
</evidence>
<evidence type="ECO:0000305" key="2"/>
<dbReference type="EMBL" id="AE017198">
    <property type="protein sequence ID" value="AAS08407.1"/>
    <property type="molecule type" value="Genomic_DNA"/>
</dbReference>
<dbReference type="RefSeq" id="WP_003647769.1">
    <property type="nucleotide sequence ID" value="NC_005362.1"/>
</dbReference>
<dbReference type="SMR" id="Q74L08"/>
<dbReference type="GeneID" id="83569837"/>
<dbReference type="KEGG" id="ljo:LJ_0416"/>
<dbReference type="eggNOG" id="COG0222">
    <property type="taxonomic scope" value="Bacteria"/>
</dbReference>
<dbReference type="HOGENOM" id="CLU_086499_3_2_9"/>
<dbReference type="Proteomes" id="UP000000581">
    <property type="component" value="Chromosome"/>
</dbReference>
<dbReference type="GO" id="GO:0022625">
    <property type="term" value="C:cytosolic large ribosomal subunit"/>
    <property type="evidence" value="ECO:0007669"/>
    <property type="project" value="TreeGrafter"/>
</dbReference>
<dbReference type="GO" id="GO:0003729">
    <property type="term" value="F:mRNA binding"/>
    <property type="evidence" value="ECO:0007669"/>
    <property type="project" value="TreeGrafter"/>
</dbReference>
<dbReference type="GO" id="GO:0003735">
    <property type="term" value="F:structural constituent of ribosome"/>
    <property type="evidence" value="ECO:0007669"/>
    <property type="project" value="InterPro"/>
</dbReference>
<dbReference type="GO" id="GO:0006412">
    <property type="term" value="P:translation"/>
    <property type="evidence" value="ECO:0007669"/>
    <property type="project" value="UniProtKB-UniRule"/>
</dbReference>
<dbReference type="CDD" id="cd00387">
    <property type="entry name" value="Ribosomal_L7_L12"/>
    <property type="match status" value="1"/>
</dbReference>
<dbReference type="FunFam" id="3.30.1390.10:FF:000001">
    <property type="entry name" value="50S ribosomal protein L7/L12"/>
    <property type="match status" value="1"/>
</dbReference>
<dbReference type="Gene3D" id="3.30.1390.10">
    <property type="match status" value="1"/>
</dbReference>
<dbReference type="Gene3D" id="1.20.5.710">
    <property type="entry name" value="Single helix bin"/>
    <property type="match status" value="1"/>
</dbReference>
<dbReference type="HAMAP" id="MF_00368">
    <property type="entry name" value="Ribosomal_bL12"/>
    <property type="match status" value="1"/>
</dbReference>
<dbReference type="InterPro" id="IPR000206">
    <property type="entry name" value="Ribosomal_bL12"/>
</dbReference>
<dbReference type="InterPro" id="IPR013823">
    <property type="entry name" value="Ribosomal_bL12_C"/>
</dbReference>
<dbReference type="InterPro" id="IPR014719">
    <property type="entry name" value="Ribosomal_bL12_C/ClpS-like"/>
</dbReference>
<dbReference type="InterPro" id="IPR008932">
    <property type="entry name" value="Ribosomal_bL12_oligo"/>
</dbReference>
<dbReference type="InterPro" id="IPR036235">
    <property type="entry name" value="Ribosomal_bL12_oligo_N_sf"/>
</dbReference>
<dbReference type="NCBIfam" id="TIGR00855">
    <property type="entry name" value="L12"/>
    <property type="match status" value="1"/>
</dbReference>
<dbReference type="PANTHER" id="PTHR45987">
    <property type="entry name" value="39S RIBOSOMAL PROTEIN L12"/>
    <property type="match status" value="1"/>
</dbReference>
<dbReference type="PANTHER" id="PTHR45987:SF4">
    <property type="entry name" value="LARGE RIBOSOMAL SUBUNIT PROTEIN BL12M"/>
    <property type="match status" value="1"/>
</dbReference>
<dbReference type="Pfam" id="PF00542">
    <property type="entry name" value="Ribosomal_L12"/>
    <property type="match status" value="1"/>
</dbReference>
<dbReference type="Pfam" id="PF16320">
    <property type="entry name" value="Ribosomal_L12_N"/>
    <property type="match status" value="1"/>
</dbReference>
<dbReference type="SUPFAM" id="SSF54736">
    <property type="entry name" value="ClpS-like"/>
    <property type="match status" value="1"/>
</dbReference>
<dbReference type="SUPFAM" id="SSF48300">
    <property type="entry name" value="Ribosomal protein L7/12, oligomerisation (N-terminal) domain"/>
    <property type="match status" value="1"/>
</dbReference>
<accession>Q74L08</accession>
<comment type="function">
    <text evidence="1">Forms part of the ribosomal stalk which helps the ribosome interact with GTP-bound translation factors. Is thus essential for accurate translation.</text>
</comment>
<comment type="subunit">
    <text evidence="1">Homodimer. Part of the ribosomal stalk of the 50S ribosomal subunit. Forms a multimeric L10(L12)X complex, where L10 forms an elongated spine to which 2 to 4 L12 dimers bind in a sequential fashion. Binds GTP-bound translation factors.</text>
</comment>
<comment type="similarity">
    <text evidence="1">Belongs to the bacterial ribosomal protein bL12 family.</text>
</comment>
<sequence>MALDTEKIIEDLKGASILELNDLVKAIEDEFGVSAAAPVAAAGAAGAGAEKTEFDVELTDVGQEKVKVIKVVRDITGLGLKDSKDLVDGAPKNVKEGVSEDEANDIKAKLEEVGATVTVK</sequence>
<keyword id="KW-0687">Ribonucleoprotein</keyword>
<keyword id="KW-0689">Ribosomal protein</keyword>
<name>RL7_LACJO</name>